<protein>
    <recommendedName>
        <fullName>F(420)H(2) dehydrogenase subunit L</fullName>
        <ecNumber evidence="3">1.5.98.3</ecNumber>
    </recommendedName>
    <alternativeName>
        <fullName>F(420)H(2)-dependent phenazine dehydrogenase subunit L</fullName>
    </alternativeName>
    <alternativeName>
        <fullName>F(420)H(2)-dependent phenazine oxidoreductase subunit L</fullName>
        <shortName>FPO subunit L</shortName>
    </alternativeName>
    <alternativeName>
        <fullName>Methanophenazine hydrogenase subunit L</fullName>
    </alternativeName>
    <alternativeName>
        <fullName>Methanosarcina-phenazine hydrogenase subunit L</fullName>
    </alternativeName>
</protein>
<name>FPOL_METMA</name>
<sequence length="672" mass="72393">MVKTALEEFAFLIPLLPALAFAITFFFGRKMPSGGAIVPILAIAASFVISFAITLGLLANPEEVISQSYSWFAVLNIGILIDPLAAVMLSMVSFVSLLIHIYAVSYMSHDAGKARYFAETALFTAAMLSLVLSDNILQLFVSWELVGLCSYLLIGFWFEKPSAAAAAKKAFLTTRIGDVMFLTGIIVLTSDLLKVSGGFQDGVYLLRFDEIFSYIPELAALQINILGFEISHLTIITLLFFGGAVGKSGQFPLHVWLPDAMEGPTTVSALIHAATMVTAGVYLVARTFPMFIAAPDSLMVVAYFGGFTALFAGTMGIVMNDLKRVLAFSTISQLGYMMLGLGLGTAIGLEAVGISLFHLINHAFFKALLFLCAGSVIHAVGTQDMRELGGVGKVMPITAATMTIAALALAGFGIPGTSIGTSGFMSKDPIIEAAYLFGEHSSNWIPYVFSILAALLTSIYIFRLIFMTFTGKPRSNYHGHESPAIMTIPLSILAIFALAFGALTRTGFMEFLEETFTNSFVNLDIGALAGIGENELVAAAGHEPLAVLWPPVIVALAGFAIAFVIYYLRAFSLGPLASMKNPIYRLLYNRYYQHQIYTEFFSIGIVYGIIAFLTQVVDVIIDSVVEGIGIVTVFVGEELRKIQTGVVQTYATALIAGVSLLIILVKLIMEVL</sequence>
<organism>
    <name type="scientific">Methanosarcina mazei (strain ATCC BAA-159 / DSM 3647 / Goe1 / Go1 / JCM 11833 / OCM 88)</name>
    <name type="common">Methanosarcina frisia</name>
    <dbReference type="NCBI Taxonomy" id="192952"/>
    <lineage>
        <taxon>Archaea</taxon>
        <taxon>Methanobacteriati</taxon>
        <taxon>Methanobacteriota</taxon>
        <taxon>Stenosarchaea group</taxon>
        <taxon>Methanomicrobia</taxon>
        <taxon>Methanosarcinales</taxon>
        <taxon>Methanosarcinaceae</taxon>
        <taxon>Methanosarcina</taxon>
    </lineage>
</organism>
<feature type="chain" id="PRO_0000423957" description="F(420)H(2) dehydrogenase subunit L">
    <location>
        <begin position="1"/>
        <end position="672"/>
    </location>
</feature>
<feature type="transmembrane region" description="Helical" evidence="1">
    <location>
        <begin position="8"/>
        <end position="28"/>
    </location>
</feature>
<feature type="transmembrane region" description="Helical" evidence="1">
    <location>
        <begin position="37"/>
        <end position="57"/>
    </location>
</feature>
<feature type="transmembrane region" description="Helical" evidence="1">
    <location>
        <begin position="79"/>
        <end position="99"/>
    </location>
</feature>
<feature type="transmembrane region" description="Helical" evidence="1">
    <location>
        <begin position="136"/>
        <end position="156"/>
    </location>
</feature>
<feature type="transmembrane region" description="Helical" evidence="1">
    <location>
        <begin position="179"/>
        <end position="199"/>
    </location>
</feature>
<feature type="transmembrane region" description="Helical" evidence="1">
    <location>
        <begin position="225"/>
        <end position="245"/>
    </location>
</feature>
<feature type="transmembrane region" description="Helical" evidence="1">
    <location>
        <begin position="265"/>
        <end position="285"/>
    </location>
</feature>
<feature type="transmembrane region" description="Helical" evidence="1">
    <location>
        <begin position="298"/>
        <end position="318"/>
    </location>
</feature>
<feature type="transmembrane region" description="Helical" evidence="1">
    <location>
        <begin position="337"/>
        <end position="357"/>
    </location>
</feature>
<feature type="transmembrane region" description="Helical" evidence="1">
    <location>
        <begin position="360"/>
        <end position="380"/>
    </location>
</feature>
<feature type="transmembrane region" description="Helical" evidence="1">
    <location>
        <begin position="394"/>
        <end position="414"/>
    </location>
</feature>
<feature type="transmembrane region" description="Helical" evidence="1">
    <location>
        <begin position="447"/>
        <end position="467"/>
    </location>
</feature>
<feature type="transmembrane region" description="Helical" evidence="1">
    <location>
        <begin position="483"/>
        <end position="503"/>
    </location>
</feature>
<feature type="transmembrane region" description="Helical" evidence="1">
    <location>
        <begin position="545"/>
        <end position="565"/>
    </location>
</feature>
<feature type="transmembrane region" description="Helical" evidence="1">
    <location>
        <begin position="601"/>
        <end position="621"/>
    </location>
</feature>
<feature type="transmembrane region" description="Helical" evidence="1">
    <location>
        <begin position="652"/>
        <end position="672"/>
    </location>
</feature>
<dbReference type="EC" id="1.5.98.3" evidence="3"/>
<dbReference type="EMBL" id="AF228525">
    <property type="protein sequence ID" value="AAF65739.1"/>
    <property type="molecule type" value="Genomic_DNA"/>
</dbReference>
<dbReference type="EMBL" id="AE008384">
    <property type="protein sequence ID" value="AAM32178.1"/>
    <property type="molecule type" value="Genomic_DNA"/>
</dbReference>
<dbReference type="RefSeq" id="WP_011034400.1">
    <property type="nucleotide sequence ID" value="NC_003901.1"/>
</dbReference>
<dbReference type="SMR" id="F1SVK0"/>
<dbReference type="TCDB" id="3.D.9.1.1">
    <property type="family name" value="the h(+)-translocating f420h2 dehydrogenase (f420h2dh) family"/>
</dbReference>
<dbReference type="GeneID" id="82161558"/>
<dbReference type="KEGG" id="mma:MM_2482"/>
<dbReference type="PATRIC" id="fig|192952.21.peg.2840"/>
<dbReference type="eggNOG" id="arCOG01539">
    <property type="taxonomic scope" value="Archaea"/>
</dbReference>
<dbReference type="HOGENOM" id="CLU_007100_6_0_2"/>
<dbReference type="BRENDA" id="1.12.98.3">
    <property type="organism ID" value="3270"/>
</dbReference>
<dbReference type="Proteomes" id="UP000000595">
    <property type="component" value="Chromosome"/>
</dbReference>
<dbReference type="GO" id="GO:0005886">
    <property type="term" value="C:plasma membrane"/>
    <property type="evidence" value="ECO:0007669"/>
    <property type="project" value="UniProtKB-SubCell"/>
</dbReference>
<dbReference type="GO" id="GO:0051911">
    <property type="term" value="F:Methanosarcina-phenazine hydrogenase activity"/>
    <property type="evidence" value="ECO:0007669"/>
    <property type="project" value="UniProtKB-EC"/>
</dbReference>
<dbReference type="GO" id="GO:0008137">
    <property type="term" value="F:NADH dehydrogenase (ubiquinone) activity"/>
    <property type="evidence" value="ECO:0007669"/>
    <property type="project" value="InterPro"/>
</dbReference>
<dbReference type="GO" id="GO:0043738">
    <property type="term" value="F:reduced coenzyme F420 dehydrogenase activity"/>
    <property type="evidence" value="ECO:0007669"/>
    <property type="project" value="RHEA"/>
</dbReference>
<dbReference type="GO" id="GO:0042773">
    <property type="term" value="P:ATP synthesis coupled electron transport"/>
    <property type="evidence" value="ECO:0007669"/>
    <property type="project" value="InterPro"/>
</dbReference>
<dbReference type="GO" id="GO:0015990">
    <property type="term" value="P:electron transport coupled proton transport"/>
    <property type="evidence" value="ECO:0007669"/>
    <property type="project" value="TreeGrafter"/>
</dbReference>
<dbReference type="GO" id="GO:0015948">
    <property type="term" value="P:methanogenesis"/>
    <property type="evidence" value="ECO:0007669"/>
    <property type="project" value="UniProtKB-KW"/>
</dbReference>
<dbReference type="GO" id="GO:0015945">
    <property type="term" value="P:methanol metabolic process"/>
    <property type="evidence" value="ECO:0007669"/>
    <property type="project" value="UniProtKB-KW"/>
</dbReference>
<dbReference type="Gene3D" id="1.20.5.2700">
    <property type="match status" value="1"/>
</dbReference>
<dbReference type="InterPro" id="IPR053610">
    <property type="entry name" value="F420H2_dehydrogenase_comp"/>
</dbReference>
<dbReference type="InterPro" id="IPR018393">
    <property type="entry name" value="NADHpl_OxRdtase_5_subgr"/>
</dbReference>
<dbReference type="InterPro" id="IPR001750">
    <property type="entry name" value="ND/Mrp_TM"/>
</dbReference>
<dbReference type="InterPro" id="IPR003945">
    <property type="entry name" value="NU5C-like"/>
</dbReference>
<dbReference type="InterPro" id="IPR001516">
    <property type="entry name" value="Proton_antipo_N"/>
</dbReference>
<dbReference type="NCBIfam" id="NF040617">
    <property type="entry name" value="F420_dehyd_FpoL"/>
    <property type="match status" value="1"/>
</dbReference>
<dbReference type="NCBIfam" id="TIGR01974">
    <property type="entry name" value="NDH_I_L"/>
    <property type="match status" value="1"/>
</dbReference>
<dbReference type="NCBIfam" id="NF005141">
    <property type="entry name" value="PRK06590.1"/>
    <property type="match status" value="1"/>
</dbReference>
<dbReference type="PANTHER" id="PTHR42829">
    <property type="entry name" value="NADH-UBIQUINONE OXIDOREDUCTASE CHAIN 5"/>
    <property type="match status" value="1"/>
</dbReference>
<dbReference type="PANTHER" id="PTHR42829:SF2">
    <property type="entry name" value="NADH-UBIQUINONE OXIDOREDUCTASE CHAIN 5"/>
    <property type="match status" value="1"/>
</dbReference>
<dbReference type="Pfam" id="PF00361">
    <property type="entry name" value="Proton_antipo_M"/>
    <property type="match status" value="1"/>
</dbReference>
<dbReference type="Pfam" id="PF00662">
    <property type="entry name" value="Proton_antipo_N"/>
    <property type="match status" value="1"/>
</dbReference>
<dbReference type="PRINTS" id="PR01434">
    <property type="entry name" value="NADHDHGNASE5"/>
</dbReference>
<dbReference type="PRINTS" id="PR01435">
    <property type="entry name" value="NPOXDRDTASE5"/>
</dbReference>
<accession>F1SVK0</accession>
<accession>Q7LWJ9</accession>
<accession>Q9P9F5</accession>
<keyword id="KW-1003">Cell membrane</keyword>
<keyword id="KW-0249">Electron transport</keyword>
<keyword id="KW-0472">Membrane</keyword>
<keyword id="KW-0484">Methanogenesis</keyword>
<keyword id="KW-0485">Methanol utilization</keyword>
<keyword id="KW-0560">Oxidoreductase</keyword>
<keyword id="KW-0812">Transmembrane</keyword>
<keyword id="KW-1133">Transmembrane helix</keyword>
<keyword id="KW-0813">Transport</keyword>
<reference key="1">
    <citation type="journal article" date="1997" name="FEMS Microbiol. Lett.">
        <title>Purification and properties of an F420H2 dehydrogenase from Methanosarcina mazei Go1.</title>
        <authorList>
            <person name="Abken H.-J."/>
            <person name="Deppenmeier U."/>
        </authorList>
    </citation>
    <scope>NUCLEOTIDE SEQUENCE [GENOMIC DNA]</scope>
    <scope>FUNCTION</scope>
    <scope>CATALYTIC ACTIVITY</scope>
    <scope>BIOPHYSICOCHEMICAL PROPERTIES</scope>
    <scope>SUBSTRATE SPECIFICITY</scope>
    <scope>SUBCELLULAR LOCATION</scope>
    <source>
        <strain>ATCC BAA-159 / DSM 3647 / Goe1 / Go1 / JCM 11833 / OCM 88</strain>
    </source>
</reference>
<reference key="2">
    <citation type="journal article" date="2000" name="J. Biol. Chem.">
        <title>The F420H2 dehydrogenase from Methanosarcina mazei is a Redox-driven proton pump closely related to NADH dehydrogenases.</title>
        <authorList>
            <person name="Baumer S."/>
            <person name="Ide T."/>
            <person name="Jacobi C."/>
            <person name="Johann A."/>
            <person name="Gottschalk G."/>
            <person name="Deppenmeier U."/>
        </authorList>
    </citation>
    <scope>NUCLEOTIDE SEQUENCE [GENOMIC DNA]</scope>
    <scope>FUNCTION IN THE PROTON TRANSLOCATION</scope>
    <scope>SUBUNIT</scope>
    <scope>NOMENCLATURE</scope>
    <source>
        <strain>ATCC BAA-159 / DSM 3647 / Goe1 / Go1 / JCM 11833 / OCM 88</strain>
    </source>
</reference>
<reference key="3">
    <citation type="journal article" date="2002" name="J. Mol. Microbiol. Biotechnol.">
        <title>The genome of Methanosarcina mazei: evidence for lateral gene transfer between Bacteria and Archaea.</title>
        <authorList>
            <person name="Deppenmeier U."/>
            <person name="Johann A."/>
            <person name="Hartsch T."/>
            <person name="Merkl R."/>
            <person name="Schmitz R.A."/>
            <person name="Martinez-Arias R."/>
            <person name="Henne A."/>
            <person name="Wiezer A."/>
            <person name="Baeumer S."/>
            <person name="Jacobi C."/>
            <person name="Brueggemann H."/>
            <person name="Lienard T."/>
            <person name="Christmann A."/>
            <person name="Boemecke M."/>
            <person name="Steckel S."/>
            <person name="Bhattacharyya A."/>
            <person name="Lykidis A."/>
            <person name="Overbeek R."/>
            <person name="Klenk H.-P."/>
            <person name="Gunsalus R.P."/>
            <person name="Fritz H.-J."/>
            <person name="Gottschalk G."/>
        </authorList>
    </citation>
    <scope>NUCLEOTIDE SEQUENCE [LARGE SCALE GENOMIC DNA]</scope>
    <source>
        <strain>ATCC BAA-159 / DSM 3647 / Goe1 / Go1 / JCM 11833 / OCM 88</strain>
    </source>
</reference>
<gene>
    <name type="primary">fpoL</name>
    <name type="ordered locus">MM_2482</name>
</gene>
<proteinExistence type="evidence at protein level"/>
<comment type="function">
    <text evidence="2 3">Component of the F(420)H(2) dehydrogenase (FPO complex) which is part of the energy-conserving F(420)H(2):heterodisulfide oxidoreductase system. The membrane-bound electron transfer system of the complex plays an important role in the metabolism of methylotrophic methanogens when the organisms grow on methanol or methylamines. Catalyzes the oxidation of methanophenazine to dihydromethanophenazine. It shuttles electrons from F(420)H(2), via FAD and iron-sulfur (Fe-S) centers, to methanophenazine (an electron carrier in the membrane). It couples the redox reaction to proton translocation (for every two electrons transferred, two hydrogen ions are translocated across the cytoplasmic membrane), and thus conserves the redox energy in a proton gradient. It also catalyzes the oxidation of F(420)H(2) with quinones such as 2,3-dimethyl-1,4-naphthoquinone, 2-methyl-1,4-naphthoquinone and tetramethyl-p-benzoquinone.</text>
</comment>
<comment type="catalytic activity">
    <reaction evidence="3">
        <text>methanophenazine + reduced coenzyme F420-(gamma-L-Glu)(n) = dihydromethanophenazine + oxidized coenzyme F420-(gamma-L-Glu)(n) + H(+)</text>
        <dbReference type="Rhea" id="RHEA:54752"/>
        <dbReference type="Rhea" id="RHEA-COMP:12939"/>
        <dbReference type="Rhea" id="RHEA-COMP:14378"/>
        <dbReference type="ChEBI" id="CHEBI:15378"/>
        <dbReference type="ChEBI" id="CHEBI:29118"/>
        <dbReference type="ChEBI" id="CHEBI:50375"/>
        <dbReference type="ChEBI" id="CHEBI:133980"/>
        <dbReference type="ChEBI" id="CHEBI:139511"/>
        <dbReference type="EC" id="1.5.98.3"/>
    </reaction>
</comment>
<comment type="biophysicochemical properties">
    <kinetics>
        <KM evidence="3">7 uM for F(420)H(2) (at 37 degrees Celsius and pH 7)</KM>
        <Vmax evidence="3">17.0 umol/min/mg enzyme (at 37 degrees Celsius and pH 7)</Vmax>
        <text>Measured for the whole complex.</text>
    </kinetics>
    <phDependence>
        <text evidence="3">Optimum pH is 8.5.</text>
    </phDependence>
    <temperatureDependence>
        <text evidence="3">Optimum temperature is 39 degrees Celsius.</text>
    </temperatureDependence>
</comment>
<comment type="subunit">
    <text evidence="2">The FPO complex is composed of at least 13 different subunits. FpoA, FpoH, FpoJ, FpoK, FpoL, FpoM and FpoN proteins constitute the membrane sector of the complex.</text>
</comment>
<comment type="subcellular location">
    <subcellularLocation>
        <location evidence="4">Cell membrane</location>
        <topology evidence="4">Multi-pass membrane protein</topology>
    </subcellularLocation>
</comment>
<comment type="similarity">
    <text evidence="4">Belongs to the complex I subunit 5 family.</text>
</comment>
<evidence type="ECO:0000255" key="1"/>
<evidence type="ECO:0000269" key="2">
    <source>
    </source>
</evidence>
<evidence type="ECO:0000269" key="3">
    <source ref="1"/>
</evidence>
<evidence type="ECO:0000305" key="4"/>